<reference evidence="10 11" key="1">
    <citation type="journal article" date="2008" name="Gene">
        <title>The gene structure of the Drosophila melanogaster proto-oncogene, kayak, and its nested gene, fos-intronic gene.</title>
        <authorList>
            <person name="Hudson S.G."/>
            <person name="Goldstein E.S."/>
        </authorList>
    </citation>
    <scope>NUCLEOTIDE SEQUENCE [MRNA] (ISOFORM SRO)</scope>
    <scope>NUCLEOTIDE SEQUENCE [MRNA] OF 1-215 (ISOFORM D)</scope>
    <scope>ALTERNATIVE PROMOTER USAGE</scope>
    <scope>ALTERNATIVE SPLICING</scope>
    <scope>DEVELOPMENTAL STAGE</scope>
    <scope>DISRUPTION PHENOTYPE</scope>
</reference>
<reference evidence="10" key="2">
    <citation type="journal article" date="2000" name="Science">
        <title>The genome sequence of Drosophila melanogaster.</title>
        <authorList>
            <person name="Adams M.D."/>
            <person name="Celniker S.E."/>
            <person name="Holt R.A."/>
            <person name="Evans C.A."/>
            <person name="Gocayne J.D."/>
            <person name="Amanatides P.G."/>
            <person name="Scherer S.E."/>
            <person name="Li P.W."/>
            <person name="Hoskins R.A."/>
            <person name="Galle R.F."/>
            <person name="George R.A."/>
            <person name="Lewis S.E."/>
            <person name="Richards S."/>
            <person name="Ashburner M."/>
            <person name="Henderson S.N."/>
            <person name="Sutton G.G."/>
            <person name="Wortman J.R."/>
            <person name="Yandell M.D."/>
            <person name="Zhang Q."/>
            <person name="Chen L.X."/>
            <person name="Brandon R.C."/>
            <person name="Rogers Y.-H.C."/>
            <person name="Blazej R.G."/>
            <person name="Champe M."/>
            <person name="Pfeiffer B.D."/>
            <person name="Wan K.H."/>
            <person name="Doyle C."/>
            <person name="Baxter E.G."/>
            <person name="Helt G."/>
            <person name="Nelson C.R."/>
            <person name="Miklos G.L.G."/>
            <person name="Abril J.F."/>
            <person name="Agbayani A."/>
            <person name="An H.-J."/>
            <person name="Andrews-Pfannkoch C."/>
            <person name="Baldwin D."/>
            <person name="Ballew R.M."/>
            <person name="Basu A."/>
            <person name="Baxendale J."/>
            <person name="Bayraktaroglu L."/>
            <person name="Beasley E.M."/>
            <person name="Beeson K.Y."/>
            <person name="Benos P.V."/>
            <person name="Berman B.P."/>
            <person name="Bhandari D."/>
            <person name="Bolshakov S."/>
            <person name="Borkova D."/>
            <person name="Botchan M.R."/>
            <person name="Bouck J."/>
            <person name="Brokstein P."/>
            <person name="Brottier P."/>
            <person name="Burtis K.C."/>
            <person name="Busam D.A."/>
            <person name="Butler H."/>
            <person name="Cadieu E."/>
            <person name="Center A."/>
            <person name="Chandra I."/>
            <person name="Cherry J.M."/>
            <person name="Cawley S."/>
            <person name="Dahlke C."/>
            <person name="Davenport L.B."/>
            <person name="Davies P."/>
            <person name="de Pablos B."/>
            <person name="Delcher A."/>
            <person name="Deng Z."/>
            <person name="Mays A.D."/>
            <person name="Dew I."/>
            <person name="Dietz S.M."/>
            <person name="Dodson K."/>
            <person name="Doup L.E."/>
            <person name="Downes M."/>
            <person name="Dugan-Rocha S."/>
            <person name="Dunkov B.C."/>
            <person name="Dunn P."/>
            <person name="Durbin K.J."/>
            <person name="Evangelista C.C."/>
            <person name="Ferraz C."/>
            <person name="Ferriera S."/>
            <person name="Fleischmann W."/>
            <person name="Fosler C."/>
            <person name="Gabrielian A.E."/>
            <person name="Garg N.S."/>
            <person name="Gelbart W.M."/>
            <person name="Glasser K."/>
            <person name="Glodek A."/>
            <person name="Gong F."/>
            <person name="Gorrell J.H."/>
            <person name="Gu Z."/>
            <person name="Guan P."/>
            <person name="Harris M."/>
            <person name="Harris N.L."/>
            <person name="Harvey D.A."/>
            <person name="Heiman T.J."/>
            <person name="Hernandez J.R."/>
            <person name="Houck J."/>
            <person name="Hostin D."/>
            <person name="Houston K.A."/>
            <person name="Howland T.J."/>
            <person name="Wei M.-H."/>
            <person name="Ibegwam C."/>
            <person name="Jalali M."/>
            <person name="Kalush F."/>
            <person name="Karpen G.H."/>
            <person name="Ke Z."/>
            <person name="Kennison J.A."/>
            <person name="Ketchum K.A."/>
            <person name="Kimmel B.E."/>
            <person name="Kodira C.D."/>
            <person name="Kraft C.L."/>
            <person name="Kravitz S."/>
            <person name="Kulp D."/>
            <person name="Lai Z."/>
            <person name="Lasko P."/>
            <person name="Lei Y."/>
            <person name="Levitsky A.A."/>
            <person name="Li J.H."/>
            <person name="Li Z."/>
            <person name="Liang Y."/>
            <person name="Lin X."/>
            <person name="Liu X."/>
            <person name="Mattei B."/>
            <person name="McIntosh T.C."/>
            <person name="McLeod M.P."/>
            <person name="McPherson D."/>
            <person name="Merkulov G."/>
            <person name="Milshina N.V."/>
            <person name="Mobarry C."/>
            <person name="Morris J."/>
            <person name="Moshrefi A."/>
            <person name="Mount S.M."/>
            <person name="Moy M."/>
            <person name="Murphy B."/>
            <person name="Murphy L."/>
            <person name="Muzny D.M."/>
            <person name="Nelson D.L."/>
            <person name="Nelson D.R."/>
            <person name="Nelson K.A."/>
            <person name="Nixon K."/>
            <person name="Nusskern D.R."/>
            <person name="Pacleb J.M."/>
            <person name="Palazzolo M."/>
            <person name="Pittman G.S."/>
            <person name="Pan S."/>
            <person name="Pollard J."/>
            <person name="Puri V."/>
            <person name="Reese M.G."/>
            <person name="Reinert K."/>
            <person name="Remington K."/>
            <person name="Saunders R.D.C."/>
            <person name="Scheeler F."/>
            <person name="Shen H."/>
            <person name="Shue B.C."/>
            <person name="Siden-Kiamos I."/>
            <person name="Simpson M."/>
            <person name="Skupski M.P."/>
            <person name="Smith T.J."/>
            <person name="Spier E."/>
            <person name="Spradling A.C."/>
            <person name="Stapleton M."/>
            <person name="Strong R."/>
            <person name="Sun E."/>
            <person name="Svirskas R."/>
            <person name="Tector C."/>
            <person name="Turner R."/>
            <person name="Venter E."/>
            <person name="Wang A.H."/>
            <person name="Wang X."/>
            <person name="Wang Z.-Y."/>
            <person name="Wassarman D.A."/>
            <person name="Weinstock G.M."/>
            <person name="Weissenbach J."/>
            <person name="Williams S.M."/>
            <person name="Woodage T."/>
            <person name="Worley K.C."/>
            <person name="Wu D."/>
            <person name="Yang S."/>
            <person name="Yao Q.A."/>
            <person name="Ye J."/>
            <person name="Yeh R.-F."/>
            <person name="Zaveri J.S."/>
            <person name="Zhan M."/>
            <person name="Zhang G."/>
            <person name="Zhao Q."/>
            <person name="Zheng L."/>
            <person name="Zheng X.H."/>
            <person name="Zhong F.N."/>
            <person name="Zhong W."/>
            <person name="Zhou X."/>
            <person name="Zhu S.C."/>
            <person name="Zhu X."/>
            <person name="Smith H.O."/>
            <person name="Gibbs R.A."/>
            <person name="Myers E.W."/>
            <person name="Rubin G.M."/>
            <person name="Venter J.C."/>
        </authorList>
    </citation>
    <scope>NUCLEOTIDE SEQUENCE [LARGE SCALE GENOMIC DNA]</scope>
    <source>
        <strain evidence="5">Berkeley</strain>
    </source>
</reference>
<reference evidence="10" key="3">
    <citation type="journal article" date="2002" name="Genome Biol.">
        <title>Annotation of the Drosophila melanogaster euchromatic genome: a systematic review.</title>
        <authorList>
            <person name="Misra S."/>
            <person name="Crosby M.A."/>
            <person name="Mungall C.J."/>
            <person name="Matthews B.B."/>
            <person name="Campbell K.S."/>
            <person name="Hradecky P."/>
            <person name="Huang Y."/>
            <person name="Kaminker J.S."/>
            <person name="Millburn G.H."/>
            <person name="Prochnik S.E."/>
            <person name="Smith C.D."/>
            <person name="Tupy J.L."/>
            <person name="Whitfield E.J."/>
            <person name="Bayraktaroglu L."/>
            <person name="Berman B.P."/>
            <person name="Bettencourt B.R."/>
            <person name="Celniker S.E."/>
            <person name="de Grey A.D.N.J."/>
            <person name="Drysdale R.A."/>
            <person name="Harris N.L."/>
            <person name="Richter J."/>
            <person name="Russo S."/>
            <person name="Schroeder A.J."/>
            <person name="Shu S.Q."/>
            <person name="Stapleton M."/>
            <person name="Yamada C."/>
            <person name="Ashburner M."/>
            <person name="Gelbart W.M."/>
            <person name="Rubin G.M."/>
            <person name="Lewis S.E."/>
        </authorList>
    </citation>
    <scope>GENOME REANNOTATION</scope>
    <source>
        <strain>Berkeley</strain>
    </source>
</reference>
<reference evidence="10" key="4">
    <citation type="journal article" date="2008" name="J. Proteome Res.">
        <title>Phosphoproteome analysis of Drosophila melanogaster embryos.</title>
        <authorList>
            <person name="Zhai B."/>
            <person name="Villen J."/>
            <person name="Beausoleil S.A."/>
            <person name="Mintseris J."/>
            <person name="Gygi S.P."/>
        </authorList>
    </citation>
    <scope>PHOSPHORYLATION [LARGE SCALE ANALYSIS] AT SER-515</scope>
    <scope>IDENTIFICATION BY MASS SPECTROMETRY</scope>
    <source>
        <tissue evidence="6">Embryo</tissue>
    </source>
</reference>
<reference evidence="10" key="5">
    <citation type="journal article" date="1990" name="Genes Dev.">
        <title>The Drosophila Fos-related AP-1 protein is a developmentally regulated transcription factor.</title>
        <authorList>
            <person name="Perkins K.K."/>
            <person name="Admon A."/>
            <person name="Patel N."/>
            <person name="Tjian R."/>
        </authorList>
    </citation>
    <scope>FUNCTION</scope>
    <scope>INTERACTION WITH JRA</scope>
    <scope>SUBCELLULAR LOCATION</scope>
    <source>
        <tissue evidence="8">Embryo</tissue>
    </source>
</reference>
<name>FOSLD_DROME</name>
<dbReference type="EMBL" id="DQ858474">
    <property type="protein sequence ID" value="ABI74756.1"/>
    <property type="molecule type" value="mRNA"/>
</dbReference>
<dbReference type="EMBL" id="DQ858475">
    <property type="protein sequence ID" value="ABI74757.1"/>
    <property type="molecule type" value="mRNA"/>
</dbReference>
<dbReference type="EMBL" id="AE014297">
    <property type="protein sequence ID" value="AAZ83991.1"/>
    <property type="molecule type" value="Genomic_DNA"/>
</dbReference>
<dbReference type="RefSeq" id="NP_001027580.1">
    <molecule id="A8MPH9-1"/>
    <property type="nucleotide sequence ID" value="NM_001032408.3"/>
</dbReference>
<dbReference type="SMR" id="A8MPH9"/>
<dbReference type="BioGRID" id="533679">
    <property type="interactions" value="67"/>
</dbReference>
<dbReference type="IntAct" id="A8MPH9">
    <property type="interactions" value="1"/>
</dbReference>
<dbReference type="iPTMnet" id="A8MPH9"/>
<dbReference type="DNASU" id="3772082"/>
<dbReference type="EnsemblMetazoa" id="FBtr0099988">
    <molecule id="A8MPH9-1"/>
    <property type="protein sequence ID" value="FBpp0099941"/>
    <property type="gene ID" value="FBgn0001297"/>
</dbReference>
<dbReference type="GeneID" id="3772082"/>
<dbReference type="AGR" id="FB:FBgn0001297"/>
<dbReference type="CTD" id="3772082"/>
<dbReference type="FlyBase" id="FBgn0001297">
    <property type="gene designation" value="kay"/>
</dbReference>
<dbReference type="VEuPathDB" id="VectorBase:FBgn0001297"/>
<dbReference type="OrthoDB" id="5866312at2759"/>
<dbReference type="SignaLink" id="A8MPH9"/>
<dbReference type="BioGRID-ORCS" id="3772082">
    <property type="hits" value="2 hits in 3 CRISPR screens"/>
</dbReference>
<dbReference type="ChiTaRS" id="kay">
    <property type="organism name" value="fly"/>
</dbReference>
<dbReference type="GenomeRNAi" id="3772082"/>
<dbReference type="Proteomes" id="UP000000803">
    <property type="component" value="Chromosome 3R"/>
</dbReference>
<dbReference type="Bgee" id="FBgn0001297">
    <property type="expression patterns" value="Expressed in adult glial cell (Drosophila) in body wall and 264 other cell types or tissues"/>
</dbReference>
<dbReference type="ExpressionAtlas" id="A8MPH9">
    <property type="expression patterns" value="baseline and differential"/>
</dbReference>
<dbReference type="GO" id="GO:0005737">
    <property type="term" value="C:cytoplasm"/>
    <property type="evidence" value="ECO:0000314"/>
    <property type="project" value="FlyBase"/>
</dbReference>
<dbReference type="GO" id="GO:0005634">
    <property type="term" value="C:nucleus"/>
    <property type="evidence" value="ECO:0000314"/>
    <property type="project" value="UniProtKB"/>
</dbReference>
<dbReference type="GO" id="GO:0035976">
    <property type="term" value="C:transcription factor AP-1 complex"/>
    <property type="evidence" value="ECO:0000353"/>
    <property type="project" value="FlyBase"/>
</dbReference>
<dbReference type="GO" id="GO:0003677">
    <property type="term" value="F:DNA binding"/>
    <property type="evidence" value="ECO:0000314"/>
    <property type="project" value="UniProtKB"/>
</dbReference>
<dbReference type="GO" id="GO:0001228">
    <property type="term" value="F:DNA-binding transcription activator activity, RNA polymerase II-specific"/>
    <property type="evidence" value="ECO:0000314"/>
    <property type="project" value="FlyBase"/>
</dbReference>
<dbReference type="GO" id="GO:0000981">
    <property type="term" value="F:DNA-binding transcription factor activity, RNA polymerase II-specific"/>
    <property type="evidence" value="ECO:0000314"/>
    <property type="project" value="FlyBase"/>
</dbReference>
<dbReference type="GO" id="GO:0140297">
    <property type="term" value="F:DNA-binding transcription factor binding"/>
    <property type="evidence" value="ECO:0000353"/>
    <property type="project" value="FlyBase"/>
</dbReference>
<dbReference type="GO" id="GO:0046982">
    <property type="term" value="F:protein heterodimerization activity"/>
    <property type="evidence" value="ECO:0000353"/>
    <property type="project" value="FlyBase"/>
</dbReference>
<dbReference type="GO" id="GO:0000978">
    <property type="term" value="F:RNA polymerase II cis-regulatory region sequence-specific DNA binding"/>
    <property type="evidence" value="ECO:0000318"/>
    <property type="project" value="GO_Central"/>
</dbReference>
<dbReference type="GO" id="GO:0048674">
    <property type="term" value="P:collateral sprouting of injured axon"/>
    <property type="evidence" value="ECO:0000315"/>
    <property type="project" value="FlyBase"/>
</dbReference>
<dbReference type="GO" id="GO:0048749">
    <property type="term" value="P:compound eye development"/>
    <property type="evidence" value="ECO:0000315"/>
    <property type="project" value="FlyBase"/>
</dbReference>
<dbReference type="GO" id="GO:0048813">
    <property type="term" value="P:dendrite morphogenesis"/>
    <property type="evidence" value="ECO:0000315"/>
    <property type="project" value="FlyBase"/>
</dbReference>
<dbReference type="GO" id="GO:0007391">
    <property type="term" value="P:dorsal closure"/>
    <property type="evidence" value="ECO:0000315"/>
    <property type="project" value="FlyBase"/>
</dbReference>
<dbReference type="GO" id="GO:0009792">
    <property type="term" value="P:embryo development ending in birth or egg hatching"/>
    <property type="evidence" value="ECO:0000315"/>
    <property type="project" value="UniProtKB"/>
</dbReference>
<dbReference type="GO" id="GO:0007297">
    <property type="term" value="P:follicle cell of egg chamber migration"/>
    <property type="evidence" value="ECO:0000315"/>
    <property type="project" value="FlyBase"/>
</dbReference>
<dbReference type="GO" id="GO:0007281">
    <property type="term" value="P:germ cell development"/>
    <property type="evidence" value="ECO:0000315"/>
    <property type="project" value="FlyBase"/>
</dbReference>
<dbReference type="GO" id="GO:0046529">
    <property type="term" value="P:imaginal disc fusion, thorax closure"/>
    <property type="evidence" value="ECO:0000315"/>
    <property type="project" value="FlyBase"/>
</dbReference>
<dbReference type="GO" id="GO:0045475">
    <property type="term" value="P:locomotor rhythm"/>
    <property type="evidence" value="ECO:0000315"/>
    <property type="project" value="FlyBase"/>
</dbReference>
<dbReference type="GO" id="GO:1903688">
    <property type="term" value="P:positive regulation of border follicle cell migration"/>
    <property type="evidence" value="ECO:0000316"/>
    <property type="project" value="FlyBase"/>
</dbReference>
<dbReference type="GO" id="GO:0045944">
    <property type="term" value="P:positive regulation of transcription by RNA polymerase II"/>
    <property type="evidence" value="ECO:0000314"/>
    <property type="project" value="FlyBase"/>
</dbReference>
<dbReference type="GO" id="GO:0007464">
    <property type="term" value="P:R3/R4 cell fate commitment"/>
    <property type="evidence" value="ECO:0000315"/>
    <property type="project" value="FlyBase"/>
</dbReference>
<dbReference type="GO" id="GO:0006357">
    <property type="term" value="P:regulation of transcription by RNA polymerase II"/>
    <property type="evidence" value="ECO:0000318"/>
    <property type="project" value="GO_Central"/>
</dbReference>
<dbReference type="GO" id="GO:0009611">
    <property type="term" value="P:response to wounding"/>
    <property type="evidence" value="ECO:0000315"/>
    <property type="project" value="FlyBase"/>
</dbReference>
<dbReference type="GO" id="GO:0051124">
    <property type="term" value="P:synaptic assembly at neuromuscular junction"/>
    <property type="evidence" value="ECO:0000316"/>
    <property type="project" value="FlyBase"/>
</dbReference>
<dbReference type="GO" id="GO:0042060">
    <property type="term" value="P:wound healing"/>
    <property type="evidence" value="ECO:0000315"/>
    <property type="project" value="FlyBase"/>
</dbReference>
<dbReference type="CDD" id="cd14721">
    <property type="entry name" value="bZIP_Fos"/>
    <property type="match status" value="1"/>
</dbReference>
<dbReference type="FunFam" id="1.20.5.170:FF:000006">
    <property type="entry name" value="fos-related antigen 2 isoform X1"/>
    <property type="match status" value="1"/>
</dbReference>
<dbReference type="Gene3D" id="1.20.5.170">
    <property type="match status" value="1"/>
</dbReference>
<dbReference type="InterPro" id="IPR000837">
    <property type="entry name" value="AP-1"/>
</dbReference>
<dbReference type="InterPro" id="IPR004827">
    <property type="entry name" value="bZIP"/>
</dbReference>
<dbReference type="InterPro" id="IPR046347">
    <property type="entry name" value="bZIP_sf"/>
</dbReference>
<dbReference type="PANTHER" id="PTHR23351:SF24">
    <property type="entry name" value="ACTIVATING TRANSCRIPTION FACTOR 3-RELATED"/>
    <property type="match status" value="1"/>
</dbReference>
<dbReference type="PANTHER" id="PTHR23351">
    <property type="entry name" value="FOS TRANSCRIPTION FACTOR-RELATED"/>
    <property type="match status" value="1"/>
</dbReference>
<dbReference type="Pfam" id="PF00170">
    <property type="entry name" value="bZIP_1"/>
    <property type="match status" value="1"/>
</dbReference>
<dbReference type="PRINTS" id="PR00042">
    <property type="entry name" value="LEUZIPPRFOS"/>
</dbReference>
<dbReference type="SMART" id="SM00338">
    <property type="entry name" value="BRLZ"/>
    <property type="match status" value="1"/>
</dbReference>
<dbReference type="SUPFAM" id="SSF57959">
    <property type="entry name" value="Leucine zipper domain"/>
    <property type="match status" value="1"/>
</dbReference>
<dbReference type="PROSITE" id="PS50217">
    <property type="entry name" value="BZIP"/>
    <property type="match status" value="1"/>
</dbReference>
<dbReference type="PROSITE" id="PS00036">
    <property type="entry name" value="BZIP_BASIC"/>
    <property type="match status" value="1"/>
</dbReference>
<feature type="chain" id="PRO_0000377385" description="Transcription factor kayak, isoforms D/sro">
    <location>
        <begin position="1"/>
        <end position="722"/>
    </location>
</feature>
<feature type="domain" description="bZIP" evidence="3">
    <location>
        <begin position="385"/>
        <end position="448"/>
    </location>
</feature>
<feature type="region of interest" description="Disordered" evidence="4">
    <location>
        <begin position="173"/>
        <end position="193"/>
    </location>
</feature>
<feature type="region of interest" description="Disordered" evidence="4">
    <location>
        <begin position="283"/>
        <end position="317"/>
    </location>
</feature>
<feature type="region of interest" description="Disordered" evidence="4">
    <location>
        <begin position="350"/>
        <end position="407"/>
    </location>
</feature>
<feature type="region of interest" description="Basic motif" evidence="3">
    <location>
        <begin position="387"/>
        <end position="406"/>
    </location>
</feature>
<feature type="region of interest" description="Leucine-zipper" evidence="3">
    <location>
        <begin position="413"/>
        <end position="420"/>
    </location>
</feature>
<feature type="region of interest" description="Disordered" evidence="4">
    <location>
        <begin position="477"/>
        <end position="519"/>
    </location>
</feature>
<feature type="region of interest" description="Disordered" evidence="4">
    <location>
        <begin position="683"/>
        <end position="722"/>
    </location>
</feature>
<feature type="compositionally biased region" description="Low complexity" evidence="4">
    <location>
        <begin position="173"/>
        <end position="188"/>
    </location>
</feature>
<feature type="compositionally biased region" description="Polar residues" evidence="4">
    <location>
        <begin position="283"/>
        <end position="300"/>
    </location>
</feature>
<feature type="compositionally biased region" description="Low complexity" evidence="4">
    <location>
        <begin position="308"/>
        <end position="317"/>
    </location>
</feature>
<feature type="compositionally biased region" description="Low complexity" evidence="4">
    <location>
        <begin position="350"/>
        <end position="364"/>
    </location>
</feature>
<feature type="compositionally biased region" description="Low complexity" evidence="4">
    <location>
        <begin position="477"/>
        <end position="498"/>
    </location>
</feature>
<feature type="compositionally biased region" description="Polar residues" evidence="4">
    <location>
        <begin position="506"/>
        <end position="516"/>
    </location>
</feature>
<feature type="modified residue" description="Phosphoserine" evidence="6">
    <location>
        <position position="515"/>
    </location>
</feature>
<feature type="splice variant" id="VSP_053112" description="In isoform sro." evidence="9">
    <original>LGNFETGQS</original>
    <variation>VSGLVKCVR</variation>
    <location>
        <begin position="202"/>
        <end position="210"/>
    </location>
</feature>
<feature type="splice variant" id="VSP_053113" description="In isoform sro." evidence="9">
    <location>
        <begin position="211"/>
        <end position="722"/>
    </location>
</feature>
<protein>
    <recommendedName>
        <fullName evidence="1 9 11">Transcription factor kayak, isoforms D/sro</fullName>
    </recommendedName>
    <alternativeName>
        <fullName evidence="1">AP-1</fullName>
    </alternativeName>
    <alternativeName>
        <fullName evidence="1">Fos-related antigen</fullName>
        <shortName evidence="1">Dfos</shortName>
        <shortName evidence="1">dFra</shortName>
    </alternativeName>
</protein>
<keyword id="KW-0010">Activator</keyword>
<keyword id="KW-0877">Alternative promoter usage</keyword>
<keyword id="KW-0025">Alternative splicing</keyword>
<keyword id="KW-0238">DNA-binding</keyword>
<keyword id="KW-0539">Nucleus</keyword>
<keyword id="KW-0597">Phosphoprotein</keyword>
<keyword id="KW-1185">Reference proteome</keyword>
<keyword id="KW-0804">Transcription</keyword>
<keyword id="KW-0805">Transcription regulation</keyword>
<comment type="function">
    <text evidence="8">Developmentally regulated transcription factor AP-1 binds and recognizes the enhancer DNA sequence: 5'-TGA[CG]TCA-3'. May play a role in the function or determination of a particular subset of cells in the developing embryo. It is able to carry out its function either independently of or in conjunction with Jra.</text>
</comment>
<comment type="subunit">
    <text>Homodimer. Heterodimer with Jra. The kay-Jra heterodimer binds more stably to the AP-1 site than either of the two proteins alone.</text>
</comment>
<comment type="interaction">
    <interactant intactId="EBI-22062276">
        <id>A8MPH9</id>
    </interactant>
    <interactant intactId="EBI-159948">
        <id>P18289</id>
        <label>Jra</label>
    </interactant>
    <organismsDiffer>false</organismsDiffer>
    <experiments>3</experiments>
</comment>
<comment type="subcellular location">
    <subcellularLocation>
        <location evidence="3 8">Nucleus</location>
    </subcellularLocation>
</comment>
<comment type="alternative products">
    <event type="alternative promoter"/>
    <event type="alternative splicing"/>
    <isoform>
        <id>A8MPH9-1</id>
        <name evidence="5">D</name>
        <name evidence="7">alpha</name>
        <sequence type="displayed"/>
    </isoform>
    <isoform>
        <id>A8MPH9-2</id>
        <name evidence="7">sro</name>
        <name evidence="7">shroud</name>
        <sequence type="described" ref="VSP_053112 VSP_053113"/>
    </isoform>
    <isoform>
        <id>P21525-2</id>
        <name evidence="5">A</name>
        <name evidence="7">beta</name>
        <sequence type="external"/>
    </isoform>
    <isoform>
        <id>P21525-3</id>
        <name evidence="5">B</name>
        <name evidence="7">gamma</name>
        <sequence type="external"/>
    </isoform>
    <isoform>
        <id>P21525-5</id>
        <name evidence="5">F</name>
        <sequence type="external"/>
    </isoform>
</comment>
<comment type="developmental stage">
    <text evidence="7">Isoform D and isoform sro are expressed both maternally and zygotically. Zygotic expression is present throughout embryogenesis, fading by second larval instar. Isoform D has higher expression level than isoform sro.</text>
</comment>
<comment type="disruption phenotype">
    <text evidence="7">Loss of isoform D causes embryonic lethality.</text>
</comment>
<comment type="miscellaneous">
    <text>Mammals typically have four copies of fos, Drosophila has a single gene with multiple transcription start sites giving rise to multiple protein isoforms.</text>
</comment>
<comment type="miscellaneous">
    <molecule>Isoform D</molecule>
    <text evidence="7">Produced by alternative promoter usage.</text>
</comment>
<comment type="miscellaneous">
    <molecule>Isoform sro</molecule>
    <text evidence="10">May perform a regulatory function, acting as a dominant negative regulator of isoform alpha.</text>
</comment>
<comment type="similarity">
    <text evidence="2">Belongs to the bZIP family. Fos subfamily.</text>
</comment>
<evidence type="ECO:0000250" key="1">
    <source>
        <dbReference type="UniProtKB" id="P21525"/>
    </source>
</evidence>
<evidence type="ECO:0000255" key="2"/>
<evidence type="ECO:0000255" key="3">
    <source>
        <dbReference type="PROSITE-ProRule" id="PRU00978"/>
    </source>
</evidence>
<evidence type="ECO:0000256" key="4">
    <source>
        <dbReference type="SAM" id="MobiDB-lite"/>
    </source>
</evidence>
<evidence type="ECO:0000269" key="5">
    <source>
    </source>
</evidence>
<evidence type="ECO:0000269" key="6">
    <source>
    </source>
</evidence>
<evidence type="ECO:0000269" key="7">
    <source>
    </source>
</evidence>
<evidence type="ECO:0000269" key="8">
    <source>
    </source>
</evidence>
<evidence type="ECO:0000303" key="9">
    <source>
    </source>
</evidence>
<evidence type="ECO:0000305" key="10"/>
<evidence type="ECO:0000312" key="11">
    <source>
        <dbReference type="EMBL" id="ABI74757.1"/>
    </source>
</evidence>
<gene>
    <name evidence="9" type="primary">kay</name>
    <name evidence="1" type="synonym">Fra</name>
    <name type="ORF">CG15509</name>
</gene>
<sequence length="722" mass="78320">MIALKATEMQHNNNALQQQQQLQHQLLQQHQQQHQQQLQQQLNSPDNNYIWATTHNANISRNNAMLQLQQQQLRAPWITDCNKQHHINNNNSMNVNYNQQLTQQPQQQQQQTQYMQHNYNNYTQQQQQQHLVPATTSQSNSHFYQCNQQQQQQQFLAPTTTTAAVVVAAAHQQHQTQQQHQSQQQQQHQRQDYASLQMGRQLGNFETGQSVLTLTTPTLTPTTTRNIEDTLGHLLSDTQTDRVAGCAGFAVPKVLPNAIDVLGMGIPTGVSSLPLQQTFDLSLGQGSESEDSNASYNDTQMNEEQDTTDTSSAHTDSTSYQAGHIMAGSVNGGGVNNFSNVLAAVSSSRGSASVGSSNANTSNTPARRGGGRRPNRSTNMTPEEEQKRAVRRERNKQAAARCRKRRVDQTNELTEEVEQLEKRGESMRKEIEVLTNSKNQLEYLLATHRATCQKIRSDMLSVVTCNGLIAPAGLLSAGSSGSGASSHHNHNSNDSSNGTITGMDATLNSTGRSNSPLDLKPAANIDSLLMHIKDEPLDGAIDSGSSLDQDGPPPSKRITLPPMSTMPHVHLSTILTPTGASSGSLQTPITSTAPGGFGSAFPVTSNGSSINNINSIGNNMNSPTLNAHNKVPKERPNTLAFQRPLGQMHLTMANNKAGGPTQIQGVPIQTPSTGTFNFDSLMDGGTGLTPVSGPLVPNSSSTNKHPLELPTPTAEPSKLVSL</sequence>
<proteinExistence type="evidence at protein level"/>
<accession>A8MPH9</accession>
<accession>A8MPH8</accession>
<organism>
    <name type="scientific">Drosophila melanogaster</name>
    <name type="common">Fruit fly</name>
    <dbReference type="NCBI Taxonomy" id="7227"/>
    <lineage>
        <taxon>Eukaryota</taxon>
        <taxon>Metazoa</taxon>
        <taxon>Ecdysozoa</taxon>
        <taxon>Arthropoda</taxon>
        <taxon>Hexapoda</taxon>
        <taxon>Insecta</taxon>
        <taxon>Pterygota</taxon>
        <taxon>Neoptera</taxon>
        <taxon>Endopterygota</taxon>
        <taxon>Diptera</taxon>
        <taxon>Brachycera</taxon>
        <taxon>Muscomorpha</taxon>
        <taxon>Ephydroidea</taxon>
        <taxon>Drosophilidae</taxon>
        <taxon>Drosophila</taxon>
        <taxon>Sophophora</taxon>
    </lineage>
</organism>